<keyword id="KW-0285">Flavoprotein</keyword>
<keyword id="KW-0288">FMN</keyword>
<keyword id="KW-0503">Monooxygenase</keyword>
<keyword id="KW-0560">Oxidoreductase</keyword>
<name>SSUD_ECOLC</name>
<proteinExistence type="inferred from homology"/>
<gene>
    <name evidence="1" type="primary">ssuD</name>
    <name type="ordered locus">EcolC_2661</name>
</gene>
<organism>
    <name type="scientific">Escherichia coli (strain ATCC 8739 / DSM 1576 / NBRC 3972 / NCIMB 8545 / WDCM 00012 / Crooks)</name>
    <dbReference type="NCBI Taxonomy" id="481805"/>
    <lineage>
        <taxon>Bacteria</taxon>
        <taxon>Pseudomonadati</taxon>
        <taxon>Pseudomonadota</taxon>
        <taxon>Gammaproteobacteria</taxon>
        <taxon>Enterobacterales</taxon>
        <taxon>Enterobacteriaceae</taxon>
        <taxon>Escherichia</taxon>
    </lineage>
</organism>
<sequence length="381" mass="41736">MSLNMFWFLPTHGDGHYLGTEEGSRPVDHGYLQQIAQAADRLGYTGVLIPTGRSCEDAWLVAASMIPVTQRLKFLVALRPSVTSPTVAARQAATLDRLSNGRALFNLVTGSDPQELAGDGVFLDHSERYEASAEFTQVWRRLLQRETVDFNGKHIHVRGAKLLFPAIQQPYPPLYFGGSSDVAQELAAEQVDLYLTWGEPPELVKEKIEQVRAKAAAHGRKIRFGIRLHVIVRETNDEAWQAAERLISHLDDETIAKAQAAFARTDSVGQQRMAALHNGKRDNLEISPNLWAGVGLVRGGAGTALVGDGPTVAARINEYAALGIDSFVLSGYPHLEEAYRVGELLFPLLDVAIPEIPQPQPLNPQGEAVANDFIPRKVAQS</sequence>
<dbReference type="EC" id="1.14.14.5" evidence="1"/>
<dbReference type="EMBL" id="CP000946">
    <property type="protein sequence ID" value="ACA78290.1"/>
    <property type="molecule type" value="Genomic_DNA"/>
</dbReference>
<dbReference type="RefSeq" id="WP_000056006.1">
    <property type="nucleotide sequence ID" value="NZ_MTFT01000009.1"/>
</dbReference>
<dbReference type="SMR" id="B1IVZ6"/>
<dbReference type="KEGG" id="ecl:EcolC_2661"/>
<dbReference type="HOGENOM" id="CLU_027853_1_0_6"/>
<dbReference type="GO" id="GO:0008726">
    <property type="term" value="F:alkanesulfonate monooxygenase activity"/>
    <property type="evidence" value="ECO:0007669"/>
    <property type="project" value="UniProtKB-UniRule"/>
</dbReference>
<dbReference type="GO" id="GO:0046306">
    <property type="term" value="P:alkanesulfonate catabolic process"/>
    <property type="evidence" value="ECO:0007669"/>
    <property type="project" value="TreeGrafter"/>
</dbReference>
<dbReference type="CDD" id="cd01094">
    <property type="entry name" value="Alkanesulfonate_monoxygenase"/>
    <property type="match status" value="1"/>
</dbReference>
<dbReference type="FunFam" id="3.20.20.30:FF:000001">
    <property type="entry name" value="Alkanesulfonate monooxygenase"/>
    <property type="match status" value="1"/>
</dbReference>
<dbReference type="Gene3D" id="3.20.20.30">
    <property type="entry name" value="Luciferase-like domain"/>
    <property type="match status" value="1"/>
</dbReference>
<dbReference type="HAMAP" id="MF_01229">
    <property type="entry name" value="Alkanesulf_monooxygen"/>
    <property type="match status" value="1"/>
</dbReference>
<dbReference type="InterPro" id="IPR019911">
    <property type="entry name" value="Alkanesulphonate_mOase_FMN-dep"/>
</dbReference>
<dbReference type="InterPro" id="IPR011251">
    <property type="entry name" value="Luciferase-like_dom"/>
</dbReference>
<dbReference type="InterPro" id="IPR036661">
    <property type="entry name" value="Luciferase-like_sf"/>
</dbReference>
<dbReference type="InterPro" id="IPR050172">
    <property type="entry name" value="SsuD_RutA_monooxygenase"/>
</dbReference>
<dbReference type="NCBIfam" id="TIGR03565">
    <property type="entry name" value="alk_sulf_monoox"/>
    <property type="match status" value="1"/>
</dbReference>
<dbReference type="NCBIfam" id="NF001939">
    <property type="entry name" value="PRK00719.1"/>
    <property type="match status" value="1"/>
</dbReference>
<dbReference type="PANTHER" id="PTHR42847">
    <property type="entry name" value="ALKANESULFONATE MONOOXYGENASE"/>
    <property type="match status" value="1"/>
</dbReference>
<dbReference type="PANTHER" id="PTHR42847:SF4">
    <property type="entry name" value="ALKANESULFONATE MONOOXYGENASE-RELATED"/>
    <property type="match status" value="1"/>
</dbReference>
<dbReference type="Pfam" id="PF00296">
    <property type="entry name" value="Bac_luciferase"/>
    <property type="match status" value="1"/>
</dbReference>
<dbReference type="SUPFAM" id="SSF51679">
    <property type="entry name" value="Bacterial luciferase-like"/>
    <property type="match status" value="1"/>
</dbReference>
<evidence type="ECO:0000255" key="1">
    <source>
        <dbReference type="HAMAP-Rule" id="MF_01229"/>
    </source>
</evidence>
<protein>
    <recommendedName>
        <fullName evidence="1">Alkanesulfonate monooxygenase</fullName>
        <ecNumber evidence="1">1.14.14.5</ecNumber>
    </recommendedName>
    <alternativeName>
        <fullName evidence="1">FMNH2-dependent aliphatic sulfonate monooxygenase</fullName>
    </alternativeName>
</protein>
<accession>B1IVZ6</accession>
<feature type="chain" id="PRO_1000085712" description="Alkanesulfonate monooxygenase">
    <location>
        <begin position="1"/>
        <end position="381"/>
    </location>
</feature>
<reference key="1">
    <citation type="submission" date="2008-02" db="EMBL/GenBank/DDBJ databases">
        <title>Complete sequence of Escherichia coli C str. ATCC 8739.</title>
        <authorList>
            <person name="Copeland A."/>
            <person name="Lucas S."/>
            <person name="Lapidus A."/>
            <person name="Glavina del Rio T."/>
            <person name="Dalin E."/>
            <person name="Tice H."/>
            <person name="Bruce D."/>
            <person name="Goodwin L."/>
            <person name="Pitluck S."/>
            <person name="Kiss H."/>
            <person name="Brettin T."/>
            <person name="Detter J.C."/>
            <person name="Han C."/>
            <person name="Kuske C.R."/>
            <person name="Schmutz J."/>
            <person name="Larimer F."/>
            <person name="Land M."/>
            <person name="Hauser L."/>
            <person name="Kyrpides N."/>
            <person name="Mikhailova N."/>
            <person name="Ingram L."/>
            <person name="Richardson P."/>
        </authorList>
    </citation>
    <scope>NUCLEOTIDE SEQUENCE [LARGE SCALE GENOMIC DNA]</scope>
    <source>
        <strain>ATCC 8739 / DSM 1576 / NBRC 3972 / NCIMB 8545 / WDCM 00012 / Crooks</strain>
    </source>
</reference>
<comment type="function">
    <text evidence="1">Catalyzes the desulfonation of aliphatic sulfonates.</text>
</comment>
<comment type="catalytic activity">
    <reaction evidence="1">
        <text>an alkanesulfonate + FMNH2 + O2 = an aldehyde + FMN + sulfite + H2O + 2 H(+)</text>
        <dbReference type="Rhea" id="RHEA:23064"/>
        <dbReference type="ChEBI" id="CHEBI:15377"/>
        <dbReference type="ChEBI" id="CHEBI:15378"/>
        <dbReference type="ChEBI" id="CHEBI:15379"/>
        <dbReference type="ChEBI" id="CHEBI:17359"/>
        <dbReference type="ChEBI" id="CHEBI:17478"/>
        <dbReference type="ChEBI" id="CHEBI:57618"/>
        <dbReference type="ChEBI" id="CHEBI:58210"/>
        <dbReference type="ChEBI" id="CHEBI:134249"/>
        <dbReference type="EC" id="1.14.14.5"/>
    </reaction>
</comment>
<comment type="subunit">
    <text evidence="1">Homotetramer.</text>
</comment>
<comment type="miscellaneous">
    <text evidence="1">FMNH(2) which is absolutely required for this enzymatic reaction, is provided by SsuE.</text>
</comment>
<comment type="similarity">
    <text evidence="1">Belongs to the SsuD family.</text>
</comment>